<organism>
    <name type="scientific">Salinispora tropica (strain ATCC BAA-916 / DSM 44818 / JCM 13857 / NBRC 105044 / CNB-440)</name>
    <dbReference type="NCBI Taxonomy" id="369723"/>
    <lineage>
        <taxon>Bacteria</taxon>
        <taxon>Bacillati</taxon>
        <taxon>Actinomycetota</taxon>
        <taxon>Actinomycetes</taxon>
        <taxon>Micromonosporales</taxon>
        <taxon>Micromonosporaceae</taxon>
        <taxon>Salinispora</taxon>
    </lineage>
</organism>
<accession>A4X639</accession>
<comment type="function">
    <text evidence="1">Catalyzes the conversion of D-ribulose 5-phosphate to formate and 3,4-dihydroxy-2-butanone 4-phosphate.</text>
</comment>
<comment type="function">
    <text evidence="1">Catalyzes the conversion of GTP to 2,5-diamino-6-ribosylamino-4(3H)-pyrimidinone 5'-phosphate (DARP), formate and pyrophosphate.</text>
</comment>
<comment type="catalytic activity">
    <reaction evidence="1">
        <text>D-ribulose 5-phosphate = (2S)-2-hydroxy-3-oxobutyl phosphate + formate + H(+)</text>
        <dbReference type="Rhea" id="RHEA:18457"/>
        <dbReference type="ChEBI" id="CHEBI:15378"/>
        <dbReference type="ChEBI" id="CHEBI:15740"/>
        <dbReference type="ChEBI" id="CHEBI:58121"/>
        <dbReference type="ChEBI" id="CHEBI:58830"/>
        <dbReference type="EC" id="4.1.99.12"/>
    </reaction>
</comment>
<comment type="catalytic activity">
    <reaction evidence="1">
        <text>GTP + 4 H2O = 2,5-diamino-6-hydroxy-4-(5-phosphoribosylamino)-pyrimidine + formate + 2 phosphate + 3 H(+)</text>
        <dbReference type="Rhea" id="RHEA:23704"/>
        <dbReference type="ChEBI" id="CHEBI:15377"/>
        <dbReference type="ChEBI" id="CHEBI:15378"/>
        <dbReference type="ChEBI" id="CHEBI:15740"/>
        <dbReference type="ChEBI" id="CHEBI:37565"/>
        <dbReference type="ChEBI" id="CHEBI:43474"/>
        <dbReference type="ChEBI" id="CHEBI:58614"/>
        <dbReference type="EC" id="3.5.4.25"/>
    </reaction>
</comment>
<comment type="cofactor">
    <cofactor evidence="1">
        <name>Mg(2+)</name>
        <dbReference type="ChEBI" id="CHEBI:18420"/>
    </cofactor>
    <cofactor evidence="1">
        <name>Mn(2+)</name>
        <dbReference type="ChEBI" id="CHEBI:29035"/>
    </cofactor>
    <text evidence="1">Binds 2 divalent metal cations per subunit. Magnesium or manganese.</text>
</comment>
<comment type="cofactor">
    <cofactor evidence="1">
        <name>Zn(2+)</name>
        <dbReference type="ChEBI" id="CHEBI:29105"/>
    </cofactor>
    <text evidence="1">Binds 1 zinc ion per subunit.</text>
</comment>
<comment type="pathway">
    <text evidence="1">Cofactor biosynthesis; riboflavin biosynthesis; 2-hydroxy-3-oxobutyl phosphate from D-ribulose 5-phosphate: step 1/1.</text>
</comment>
<comment type="pathway">
    <text evidence="1">Cofactor biosynthesis; riboflavin biosynthesis; 5-amino-6-(D-ribitylamino)uracil from GTP: step 1/4.</text>
</comment>
<comment type="similarity">
    <text evidence="1">In the N-terminal section; belongs to the DHBP synthase family.</text>
</comment>
<comment type="similarity">
    <text evidence="1">In the C-terminal section; belongs to the GTP cyclohydrolase II family.</text>
</comment>
<name>RIBBA_SALTO</name>
<reference key="1">
    <citation type="journal article" date="2007" name="Proc. Natl. Acad. Sci. U.S.A.">
        <title>Genome sequencing reveals complex secondary metabolome in the marine actinomycete Salinispora tropica.</title>
        <authorList>
            <person name="Udwary D.W."/>
            <person name="Zeigler L."/>
            <person name="Asolkar R.N."/>
            <person name="Singan V."/>
            <person name="Lapidus A."/>
            <person name="Fenical W."/>
            <person name="Jensen P.R."/>
            <person name="Moore B.S."/>
        </authorList>
    </citation>
    <scope>NUCLEOTIDE SEQUENCE [LARGE SCALE GENOMIC DNA]</scope>
    <source>
        <strain>ATCC BAA-916 / DSM 44818 / JCM 13857 / NBRC 105044 / CNB-440</strain>
    </source>
</reference>
<dbReference type="EC" id="4.1.99.12" evidence="1"/>
<dbReference type="EC" id="3.5.4.25" evidence="1"/>
<dbReference type="EMBL" id="CP000667">
    <property type="protein sequence ID" value="ABP54339.1"/>
    <property type="molecule type" value="Genomic_DNA"/>
</dbReference>
<dbReference type="RefSeq" id="WP_011905769.1">
    <property type="nucleotide sequence ID" value="NC_009380.1"/>
</dbReference>
<dbReference type="SMR" id="A4X639"/>
<dbReference type="STRING" id="369723.Strop_1877"/>
<dbReference type="KEGG" id="stp:Strop_1877"/>
<dbReference type="PATRIC" id="fig|369723.5.peg.1925"/>
<dbReference type="eggNOG" id="COG0108">
    <property type="taxonomic scope" value="Bacteria"/>
</dbReference>
<dbReference type="eggNOG" id="COG0807">
    <property type="taxonomic scope" value="Bacteria"/>
</dbReference>
<dbReference type="HOGENOM" id="CLU_020273_1_2_11"/>
<dbReference type="UniPathway" id="UPA00275">
    <property type="reaction ID" value="UER00399"/>
</dbReference>
<dbReference type="UniPathway" id="UPA00275">
    <property type="reaction ID" value="UER00400"/>
</dbReference>
<dbReference type="Proteomes" id="UP000000235">
    <property type="component" value="Chromosome"/>
</dbReference>
<dbReference type="GO" id="GO:0005829">
    <property type="term" value="C:cytosol"/>
    <property type="evidence" value="ECO:0007669"/>
    <property type="project" value="TreeGrafter"/>
</dbReference>
<dbReference type="GO" id="GO:0008686">
    <property type="term" value="F:3,4-dihydroxy-2-butanone-4-phosphate synthase activity"/>
    <property type="evidence" value="ECO:0007669"/>
    <property type="project" value="UniProtKB-UniRule"/>
</dbReference>
<dbReference type="GO" id="GO:0005525">
    <property type="term" value="F:GTP binding"/>
    <property type="evidence" value="ECO:0007669"/>
    <property type="project" value="UniProtKB-KW"/>
</dbReference>
<dbReference type="GO" id="GO:0003935">
    <property type="term" value="F:GTP cyclohydrolase II activity"/>
    <property type="evidence" value="ECO:0007669"/>
    <property type="project" value="UniProtKB-UniRule"/>
</dbReference>
<dbReference type="GO" id="GO:0000287">
    <property type="term" value="F:magnesium ion binding"/>
    <property type="evidence" value="ECO:0007669"/>
    <property type="project" value="UniProtKB-UniRule"/>
</dbReference>
<dbReference type="GO" id="GO:0030145">
    <property type="term" value="F:manganese ion binding"/>
    <property type="evidence" value="ECO:0007669"/>
    <property type="project" value="UniProtKB-UniRule"/>
</dbReference>
<dbReference type="GO" id="GO:0008270">
    <property type="term" value="F:zinc ion binding"/>
    <property type="evidence" value="ECO:0007669"/>
    <property type="project" value="UniProtKB-UniRule"/>
</dbReference>
<dbReference type="GO" id="GO:0009231">
    <property type="term" value="P:riboflavin biosynthetic process"/>
    <property type="evidence" value="ECO:0007669"/>
    <property type="project" value="UniProtKB-UniRule"/>
</dbReference>
<dbReference type="CDD" id="cd00641">
    <property type="entry name" value="GTP_cyclohydro2"/>
    <property type="match status" value="1"/>
</dbReference>
<dbReference type="FunFam" id="3.40.50.10990:FF:000001">
    <property type="entry name" value="Riboflavin biosynthesis protein RibBA"/>
    <property type="match status" value="1"/>
</dbReference>
<dbReference type="FunFam" id="3.90.870.10:FF:000001">
    <property type="entry name" value="Riboflavin biosynthesis protein RibBA"/>
    <property type="match status" value="1"/>
</dbReference>
<dbReference type="Gene3D" id="3.90.870.10">
    <property type="entry name" value="DHBP synthase"/>
    <property type="match status" value="1"/>
</dbReference>
<dbReference type="Gene3D" id="3.40.50.10990">
    <property type="entry name" value="GTP cyclohydrolase II"/>
    <property type="match status" value="1"/>
</dbReference>
<dbReference type="HAMAP" id="MF_00179">
    <property type="entry name" value="RibA"/>
    <property type="match status" value="1"/>
</dbReference>
<dbReference type="HAMAP" id="MF_00180">
    <property type="entry name" value="RibB"/>
    <property type="match status" value="1"/>
</dbReference>
<dbReference type="HAMAP" id="MF_01283">
    <property type="entry name" value="RibBA"/>
    <property type="match status" value="1"/>
</dbReference>
<dbReference type="InterPro" id="IPR017945">
    <property type="entry name" value="DHBP_synth_RibB-like_a/b_dom"/>
</dbReference>
<dbReference type="InterPro" id="IPR000422">
    <property type="entry name" value="DHBP_synthase_RibB"/>
</dbReference>
<dbReference type="InterPro" id="IPR032677">
    <property type="entry name" value="GTP_cyclohydro_II"/>
</dbReference>
<dbReference type="InterPro" id="IPR000926">
    <property type="entry name" value="RibA"/>
</dbReference>
<dbReference type="InterPro" id="IPR036144">
    <property type="entry name" value="RibA-like_sf"/>
</dbReference>
<dbReference type="InterPro" id="IPR016299">
    <property type="entry name" value="Riboflavin_synth_RibBA"/>
</dbReference>
<dbReference type="NCBIfam" id="NF001591">
    <property type="entry name" value="PRK00393.1"/>
    <property type="match status" value="1"/>
</dbReference>
<dbReference type="NCBIfam" id="NF006803">
    <property type="entry name" value="PRK09311.1"/>
    <property type="match status" value="1"/>
</dbReference>
<dbReference type="NCBIfam" id="TIGR00505">
    <property type="entry name" value="ribA"/>
    <property type="match status" value="1"/>
</dbReference>
<dbReference type="NCBIfam" id="TIGR00506">
    <property type="entry name" value="ribB"/>
    <property type="match status" value="1"/>
</dbReference>
<dbReference type="PANTHER" id="PTHR21327:SF18">
    <property type="entry name" value="3,4-DIHYDROXY-2-BUTANONE 4-PHOSPHATE SYNTHASE"/>
    <property type="match status" value="1"/>
</dbReference>
<dbReference type="PANTHER" id="PTHR21327">
    <property type="entry name" value="GTP CYCLOHYDROLASE II-RELATED"/>
    <property type="match status" value="1"/>
</dbReference>
<dbReference type="Pfam" id="PF00926">
    <property type="entry name" value="DHBP_synthase"/>
    <property type="match status" value="1"/>
</dbReference>
<dbReference type="Pfam" id="PF00925">
    <property type="entry name" value="GTP_cyclohydro2"/>
    <property type="match status" value="1"/>
</dbReference>
<dbReference type="PIRSF" id="PIRSF001259">
    <property type="entry name" value="RibA"/>
    <property type="match status" value="1"/>
</dbReference>
<dbReference type="SUPFAM" id="SSF142695">
    <property type="entry name" value="RibA-like"/>
    <property type="match status" value="1"/>
</dbReference>
<dbReference type="SUPFAM" id="SSF55821">
    <property type="entry name" value="YrdC/RibB"/>
    <property type="match status" value="1"/>
</dbReference>
<keyword id="KW-0342">GTP-binding</keyword>
<keyword id="KW-0378">Hydrolase</keyword>
<keyword id="KW-0456">Lyase</keyword>
<keyword id="KW-0460">Magnesium</keyword>
<keyword id="KW-0464">Manganese</keyword>
<keyword id="KW-0479">Metal-binding</keyword>
<keyword id="KW-0511">Multifunctional enzyme</keyword>
<keyword id="KW-0547">Nucleotide-binding</keyword>
<keyword id="KW-1185">Reference proteome</keyword>
<keyword id="KW-0686">Riboflavin biosynthesis</keyword>
<keyword id="KW-0862">Zinc</keyword>
<protein>
    <recommendedName>
        <fullName evidence="1">Riboflavin biosynthesis protein RibBA</fullName>
    </recommendedName>
    <domain>
        <recommendedName>
            <fullName evidence="1">3,4-dihydroxy-2-butanone 4-phosphate synthase</fullName>
            <shortName evidence="1">DHBP synthase</shortName>
            <ecNumber evidence="1">4.1.99.12</ecNumber>
        </recommendedName>
    </domain>
    <domain>
        <recommendedName>
            <fullName evidence="1">GTP cyclohydrolase-2</fullName>
            <ecNumber evidence="1">3.5.4.25</ecNumber>
        </recommendedName>
        <alternativeName>
            <fullName evidence="1">GTP cyclohydrolase II</fullName>
        </alternativeName>
    </domain>
</protein>
<proteinExistence type="inferred from homology"/>
<evidence type="ECO:0000255" key="1">
    <source>
        <dbReference type="HAMAP-Rule" id="MF_01283"/>
    </source>
</evidence>
<gene>
    <name evidence="1" type="primary">ribBA</name>
    <name type="ordered locus">Strop_1877</name>
</gene>
<sequence length="400" mass="43910">MTTFGTIEQAMAEILAGRPVVVVDDANRENEGDLIFAAELATPELVAFMVRYTSGYICASLTEDDCDRLDLPPMHHTNQDRRGTAYMVTVDARKGVSTGISAADRARVIRLLADPSTTPDDLARPGHVVPLRAREGGVLRRTGHTEAATDLTRLAGLRPAGVLCELVNDDGTMMRVPDLERFCAEHSLVLVTIADLVMYRRRTEKQVELVAEARLPTRHGDFRVAGYRGDYDSAEHVALVMGDLGDGRDVLVRAHSECLTGDVFGSLRCDCGLQLDTAMELVAKEGRGVVLYIRGHEGRGIGLLHKLRAYQLQDKGRDTVEANLELGLPVDARDYGTGAQVLYDLGVRSMRLLTNNPAKRAGLEGYGLTVTERVALPVQSHPENERYLRTKRDRMGHLLG</sequence>
<feature type="chain" id="PRO_1000085900" description="Riboflavin biosynthesis protein RibBA">
    <location>
        <begin position="1"/>
        <end position="400"/>
    </location>
</feature>
<feature type="region of interest" description="DHBP synthase">
    <location>
        <begin position="1"/>
        <end position="202"/>
    </location>
</feature>
<feature type="region of interest" description="GTP cyclohydrolase II">
    <location>
        <begin position="203"/>
        <end position="400"/>
    </location>
</feature>
<feature type="active site" description="Proton acceptor; for GTP cyclohydrolase activity" evidence="1">
    <location>
        <position position="331"/>
    </location>
</feature>
<feature type="active site" description="Nucleophile; for GTP cyclohydrolase activity" evidence="1">
    <location>
        <position position="333"/>
    </location>
</feature>
<feature type="binding site" evidence="1">
    <location>
        <begin position="28"/>
        <end position="29"/>
    </location>
    <ligand>
        <name>D-ribulose 5-phosphate</name>
        <dbReference type="ChEBI" id="CHEBI:58121"/>
    </ligand>
</feature>
<feature type="binding site" evidence="1">
    <location>
        <position position="29"/>
    </location>
    <ligand>
        <name>Mg(2+)</name>
        <dbReference type="ChEBI" id="CHEBI:18420"/>
        <label>1</label>
    </ligand>
</feature>
<feature type="binding site" evidence="1">
    <location>
        <position position="29"/>
    </location>
    <ligand>
        <name>Mg(2+)</name>
        <dbReference type="ChEBI" id="CHEBI:18420"/>
        <label>2</label>
    </ligand>
</feature>
<feature type="binding site" evidence="1">
    <location>
        <position position="33"/>
    </location>
    <ligand>
        <name>D-ribulose 5-phosphate</name>
        <dbReference type="ChEBI" id="CHEBI:58121"/>
    </ligand>
</feature>
<feature type="binding site" evidence="1">
    <location>
        <begin position="141"/>
        <end position="145"/>
    </location>
    <ligand>
        <name>D-ribulose 5-phosphate</name>
        <dbReference type="ChEBI" id="CHEBI:58121"/>
    </ligand>
</feature>
<feature type="binding site" evidence="1">
    <location>
        <position position="144"/>
    </location>
    <ligand>
        <name>Mg(2+)</name>
        <dbReference type="ChEBI" id="CHEBI:18420"/>
        <label>2</label>
    </ligand>
</feature>
<feature type="binding site" evidence="1">
    <location>
        <position position="165"/>
    </location>
    <ligand>
        <name>D-ribulose 5-phosphate</name>
        <dbReference type="ChEBI" id="CHEBI:58121"/>
    </ligand>
</feature>
<feature type="binding site" evidence="1">
    <location>
        <begin position="253"/>
        <end position="257"/>
    </location>
    <ligand>
        <name>GTP</name>
        <dbReference type="ChEBI" id="CHEBI:37565"/>
    </ligand>
</feature>
<feature type="binding site" evidence="1">
    <location>
        <position position="258"/>
    </location>
    <ligand>
        <name>Zn(2+)</name>
        <dbReference type="ChEBI" id="CHEBI:29105"/>
        <note>catalytic</note>
    </ligand>
</feature>
<feature type="binding site" evidence="1">
    <location>
        <position position="269"/>
    </location>
    <ligand>
        <name>Zn(2+)</name>
        <dbReference type="ChEBI" id="CHEBI:29105"/>
        <note>catalytic</note>
    </ligand>
</feature>
<feature type="binding site" evidence="1">
    <location>
        <position position="271"/>
    </location>
    <ligand>
        <name>Zn(2+)</name>
        <dbReference type="ChEBI" id="CHEBI:29105"/>
        <note>catalytic</note>
    </ligand>
</feature>
<feature type="binding site" evidence="1">
    <location>
        <position position="274"/>
    </location>
    <ligand>
        <name>GTP</name>
        <dbReference type="ChEBI" id="CHEBI:37565"/>
    </ligand>
</feature>
<feature type="binding site" evidence="1">
    <location>
        <begin position="297"/>
        <end position="299"/>
    </location>
    <ligand>
        <name>GTP</name>
        <dbReference type="ChEBI" id="CHEBI:37565"/>
    </ligand>
</feature>
<feature type="binding site" evidence="1">
    <location>
        <position position="319"/>
    </location>
    <ligand>
        <name>GTP</name>
        <dbReference type="ChEBI" id="CHEBI:37565"/>
    </ligand>
</feature>
<feature type="binding site" evidence="1">
    <location>
        <position position="354"/>
    </location>
    <ligand>
        <name>GTP</name>
        <dbReference type="ChEBI" id="CHEBI:37565"/>
    </ligand>
</feature>
<feature type="binding site" evidence="1">
    <location>
        <position position="359"/>
    </location>
    <ligand>
        <name>GTP</name>
        <dbReference type="ChEBI" id="CHEBI:37565"/>
    </ligand>
</feature>
<feature type="site" description="Essential for DHBP synthase activity" evidence="1">
    <location>
        <position position="127"/>
    </location>
</feature>
<feature type="site" description="Essential for DHBP synthase activity" evidence="1">
    <location>
        <position position="165"/>
    </location>
</feature>